<organismHost>
    <name type="scientific">Cicer arietinum</name>
    <name type="common">Chickpea</name>
    <name type="synonym">Garbanzo</name>
    <dbReference type="NCBI Taxonomy" id="3827"/>
</organismHost>
<organismHost>
    <name type="scientific">Lens culinaris</name>
    <name type="common">Lentil</name>
    <name type="synonym">Cicer lens</name>
    <dbReference type="NCBI Taxonomy" id="3864"/>
</organismHost>
<organismHost>
    <name type="scientific">Phaseolus vulgaris</name>
    <name type="common">Kidney bean</name>
    <name type="synonym">French bean</name>
    <dbReference type="NCBI Taxonomy" id="3885"/>
</organismHost>
<organismHost>
    <name type="scientific">Vicia faba</name>
    <name type="common">Broad bean</name>
    <name type="synonym">Faba vulgaris</name>
    <dbReference type="NCBI Taxonomy" id="3906"/>
</organismHost>
<accession>O39829</accession>
<evidence type="ECO:0000305" key="1"/>
<feature type="chain" id="PRO_0000378534" description="Protein U1">
    <location>
        <begin position="1"/>
        <end position="155"/>
    </location>
</feature>
<dbReference type="EMBL" id="Y11406">
    <property type="protein sequence ID" value="CAA72210.1"/>
    <property type="molecule type" value="Genomic_DNA"/>
</dbReference>
<dbReference type="Proteomes" id="UP001515460">
    <property type="component" value="Genome"/>
</dbReference>
<protein>
    <recommendedName>
        <fullName>Protein U1</fullName>
    </recommendedName>
</protein>
<proteinExistence type="inferred from homology"/>
<comment type="similarity">
    <text evidence="1">Belongs to the nanovirus U1 protein family.</text>
</comment>
<reference key="1">
    <citation type="journal article" date="1997" name="Virology">
        <title>Analysis of six DNA components of the faba bean necrotic yellows virus genome and their structural affinity to related plant virus genomes.</title>
        <authorList>
            <person name="Katul L."/>
            <person name="Maiss E."/>
            <person name="Morozov S.Y."/>
            <person name="Vetten H.J."/>
        </authorList>
    </citation>
    <scope>NUCLEOTIDE SEQUENCE [GENOMIC DNA]</scope>
</reference>
<sequence length="155" mass="18067">MGVSPVRDSWLVDEASDELISSERKLIAVECHDDDSQVINVKVEDICKDLSDKVVLKLQFRLCYKYRKLLDITLLGCRMKVYTQLKNTSLNSLKSLLQKRMNNICNDNYAIGIRMFFVNINQFIKSCKWIVSTEDVYPICTLYHMRDSDVFNVIK</sequence>
<organism>
    <name type="scientific">Faba bean necrotic yellows virus (isolate Syrian SV292-88)</name>
    <name type="common">FBNYV</name>
    <dbReference type="NCBI Taxonomy" id="291604"/>
    <lineage>
        <taxon>Viruses</taxon>
        <taxon>Monodnaviria</taxon>
        <taxon>Shotokuvirae</taxon>
        <taxon>Cressdnaviricota</taxon>
        <taxon>Arfiviricetes</taxon>
        <taxon>Mulpavirales</taxon>
        <taxon>Nanoviridae</taxon>
        <taxon>Nanovirus</taxon>
        <taxon>Faba bean necrotic yellows virus</taxon>
    </lineage>
</organism>
<gene>
    <name type="primary">DNA-U1</name>
    <name type="synonym">C3</name>
</gene>
<name>U1_FBNY2</name>
<keyword id="KW-1185">Reference proteome</keyword>